<feature type="chain" id="PRO_1000088213" description="LL-diaminopimelate aminotransferase">
    <location>
        <begin position="1"/>
        <end position="409"/>
    </location>
</feature>
<feature type="binding site" evidence="1">
    <location>
        <position position="15"/>
    </location>
    <ligand>
        <name>substrate</name>
    </ligand>
</feature>
<feature type="binding site" evidence="1">
    <location>
        <position position="42"/>
    </location>
    <ligand>
        <name>substrate</name>
    </ligand>
</feature>
<feature type="binding site" evidence="1">
    <location>
        <position position="72"/>
    </location>
    <ligand>
        <name>pyridoxal 5'-phosphate</name>
        <dbReference type="ChEBI" id="CHEBI:597326"/>
    </ligand>
</feature>
<feature type="binding site" evidence="1">
    <location>
        <begin position="108"/>
        <end position="109"/>
    </location>
    <ligand>
        <name>pyridoxal 5'-phosphate</name>
        <dbReference type="ChEBI" id="CHEBI:597326"/>
    </ligand>
</feature>
<feature type="binding site" evidence="1">
    <location>
        <position position="109"/>
    </location>
    <ligand>
        <name>substrate</name>
    </ligand>
</feature>
<feature type="binding site" evidence="1">
    <location>
        <position position="132"/>
    </location>
    <ligand>
        <name>pyridoxal 5'-phosphate</name>
        <dbReference type="ChEBI" id="CHEBI:597326"/>
    </ligand>
</feature>
<feature type="binding site" evidence="1">
    <location>
        <position position="132"/>
    </location>
    <ligand>
        <name>substrate</name>
    </ligand>
</feature>
<feature type="binding site" evidence="1">
    <location>
        <position position="187"/>
    </location>
    <ligand>
        <name>pyridoxal 5'-phosphate</name>
        <dbReference type="ChEBI" id="CHEBI:597326"/>
    </ligand>
</feature>
<feature type="binding site" evidence="1">
    <location>
        <position position="187"/>
    </location>
    <ligand>
        <name>substrate</name>
    </ligand>
</feature>
<feature type="binding site" evidence="1">
    <location>
        <position position="218"/>
    </location>
    <ligand>
        <name>pyridoxal 5'-phosphate</name>
        <dbReference type="ChEBI" id="CHEBI:597326"/>
    </ligand>
</feature>
<feature type="binding site" evidence="1">
    <location>
        <begin position="246"/>
        <end position="248"/>
    </location>
    <ligand>
        <name>pyridoxal 5'-phosphate</name>
        <dbReference type="ChEBI" id="CHEBI:597326"/>
    </ligand>
</feature>
<feature type="binding site" evidence="1">
    <location>
        <position position="257"/>
    </location>
    <ligand>
        <name>pyridoxal 5'-phosphate</name>
        <dbReference type="ChEBI" id="CHEBI:597326"/>
    </ligand>
</feature>
<feature type="binding site" evidence="1">
    <location>
        <position position="292"/>
    </location>
    <ligand>
        <name>pyridoxal 5'-phosphate</name>
        <dbReference type="ChEBI" id="CHEBI:597326"/>
    </ligand>
</feature>
<feature type="binding site" evidence="1">
    <location>
        <position position="292"/>
    </location>
    <ligand>
        <name>substrate</name>
    </ligand>
</feature>
<feature type="binding site" evidence="1">
    <location>
        <position position="388"/>
    </location>
    <ligand>
        <name>substrate</name>
    </ligand>
</feature>
<feature type="modified residue" description="N6-(pyridoxal phosphate)lysine" evidence="1">
    <location>
        <position position="249"/>
    </location>
</feature>
<comment type="function">
    <text evidence="1">Involved in the synthesis of meso-diaminopimelate (m-DAP or DL-DAP), required for both lysine and peptidoglycan biosynthesis. Catalyzes the direct conversion of tetrahydrodipicolinate to LL-diaminopimelate.</text>
</comment>
<comment type="catalytic activity">
    <reaction evidence="1">
        <text>(2S,6S)-2,6-diaminopimelate + 2-oxoglutarate = (S)-2,3,4,5-tetrahydrodipicolinate + L-glutamate + H2O + H(+)</text>
        <dbReference type="Rhea" id="RHEA:23988"/>
        <dbReference type="ChEBI" id="CHEBI:15377"/>
        <dbReference type="ChEBI" id="CHEBI:15378"/>
        <dbReference type="ChEBI" id="CHEBI:16810"/>
        <dbReference type="ChEBI" id="CHEBI:16845"/>
        <dbReference type="ChEBI" id="CHEBI:29985"/>
        <dbReference type="ChEBI" id="CHEBI:57609"/>
        <dbReference type="EC" id="2.6.1.83"/>
    </reaction>
</comment>
<comment type="cofactor">
    <cofactor evidence="1">
        <name>pyridoxal 5'-phosphate</name>
        <dbReference type="ChEBI" id="CHEBI:597326"/>
    </cofactor>
</comment>
<comment type="pathway">
    <text evidence="1">Amino-acid biosynthesis; L-lysine biosynthesis via DAP pathway; LL-2,6-diaminopimelate from (S)-tetrahydrodipicolinate (aminotransferase route): step 1/1.</text>
</comment>
<comment type="subunit">
    <text evidence="1">Homodimer.</text>
</comment>
<comment type="similarity">
    <text evidence="1">Belongs to the class-I pyridoxal-phosphate-dependent aminotransferase family. LL-diaminopimelate aminotransferase subfamily.</text>
</comment>
<accession>B0CDH5</accession>
<protein>
    <recommendedName>
        <fullName evidence="1">LL-diaminopimelate aminotransferase</fullName>
        <shortName evidence="1">DAP-AT</shortName>
        <shortName evidence="1">DAP-aminotransferase</shortName>
        <shortName evidence="1">LL-DAP-aminotransferase</shortName>
        <ecNumber evidence="1">2.6.1.83</ecNumber>
    </recommendedName>
</protein>
<organism>
    <name type="scientific">Acaryochloris marina (strain MBIC 11017)</name>
    <dbReference type="NCBI Taxonomy" id="329726"/>
    <lineage>
        <taxon>Bacteria</taxon>
        <taxon>Bacillati</taxon>
        <taxon>Cyanobacteriota</taxon>
        <taxon>Cyanophyceae</taxon>
        <taxon>Acaryochloridales</taxon>
        <taxon>Acaryochloridaceae</taxon>
        <taxon>Acaryochloris</taxon>
    </lineage>
</organism>
<dbReference type="EC" id="2.6.1.83" evidence="1"/>
<dbReference type="EMBL" id="CP000828">
    <property type="protein sequence ID" value="ABW26900.1"/>
    <property type="molecule type" value="Genomic_DNA"/>
</dbReference>
<dbReference type="RefSeq" id="WP_012162402.1">
    <property type="nucleotide sequence ID" value="NC_009925.1"/>
</dbReference>
<dbReference type="SMR" id="B0CDH5"/>
<dbReference type="STRING" id="329726.AM1_1880"/>
<dbReference type="KEGG" id="amr:AM1_1880"/>
<dbReference type="eggNOG" id="COG0436">
    <property type="taxonomic scope" value="Bacteria"/>
</dbReference>
<dbReference type="HOGENOM" id="CLU_051433_0_0_3"/>
<dbReference type="OrthoDB" id="9802328at2"/>
<dbReference type="UniPathway" id="UPA00034">
    <property type="reaction ID" value="UER00466"/>
</dbReference>
<dbReference type="Proteomes" id="UP000000268">
    <property type="component" value="Chromosome"/>
</dbReference>
<dbReference type="GO" id="GO:0010285">
    <property type="term" value="F:L,L-diaminopimelate aminotransferase activity"/>
    <property type="evidence" value="ECO:0007669"/>
    <property type="project" value="UniProtKB-UniRule"/>
</dbReference>
<dbReference type="GO" id="GO:0030170">
    <property type="term" value="F:pyridoxal phosphate binding"/>
    <property type="evidence" value="ECO:0007669"/>
    <property type="project" value="UniProtKB-UniRule"/>
</dbReference>
<dbReference type="GO" id="GO:0033362">
    <property type="term" value="P:lysine biosynthetic process via diaminopimelate, diaminopimelate-aminotransferase pathway"/>
    <property type="evidence" value="ECO:0007669"/>
    <property type="project" value="UniProtKB-UniRule"/>
</dbReference>
<dbReference type="CDD" id="cd00609">
    <property type="entry name" value="AAT_like"/>
    <property type="match status" value="1"/>
</dbReference>
<dbReference type="FunFam" id="3.40.640.10:FF:000099">
    <property type="entry name" value="LL-diaminopimelate aminotransferase, chloroplastic"/>
    <property type="match status" value="1"/>
</dbReference>
<dbReference type="Gene3D" id="3.90.1150.10">
    <property type="entry name" value="Aspartate Aminotransferase, domain 1"/>
    <property type="match status" value="1"/>
</dbReference>
<dbReference type="Gene3D" id="3.40.640.10">
    <property type="entry name" value="Type I PLP-dependent aspartate aminotransferase-like (Major domain)"/>
    <property type="match status" value="1"/>
</dbReference>
<dbReference type="HAMAP" id="MF_01642">
    <property type="entry name" value="DapL_aminotrans_1"/>
    <property type="match status" value="1"/>
</dbReference>
<dbReference type="InterPro" id="IPR004839">
    <property type="entry name" value="Aminotransferase_I/II_large"/>
</dbReference>
<dbReference type="InterPro" id="IPR019942">
    <property type="entry name" value="DapL/ALD1"/>
</dbReference>
<dbReference type="InterPro" id="IPR015424">
    <property type="entry name" value="PyrdxlP-dep_Trfase"/>
</dbReference>
<dbReference type="InterPro" id="IPR015421">
    <property type="entry name" value="PyrdxlP-dep_Trfase_major"/>
</dbReference>
<dbReference type="InterPro" id="IPR015422">
    <property type="entry name" value="PyrdxlP-dep_Trfase_small"/>
</dbReference>
<dbReference type="NCBIfam" id="TIGR03542">
    <property type="entry name" value="DAPAT_plant"/>
    <property type="match status" value="1"/>
</dbReference>
<dbReference type="PANTHER" id="PTHR43144">
    <property type="entry name" value="AMINOTRANSFERASE"/>
    <property type="match status" value="1"/>
</dbReference>
<dbReference type="Pfam" id="PF00155">
    <property type="entry name" value="Aminotran_1_2"/>
    <property type="match status" value="1"/>
</dbReference>
<dbReference type="SUPFAM" id="SSF53383">
    <property type="entry name" value="PLP-dependent transferases"/>
    <property type="match status" value="1"/>
</dbReference>
<evidence type="ECO:0000255" key="1">
    <source>
        <dbReference type="HAMAP-Rule" id="MF_01642"/>
    </source>
</evidence>
<sequence length="409" mass="44620">MATINDNYLKLKAGYLFPEIGRRVSAFAEANPDAPIIKLGIGDVTEPLPEACRSAMVTAVEDMGNRDSFKGYGPEQGYGWLREKIAAHDFQARGCDVDAGEIFISDGSKCDCGNILDIFGDNNTIAVTDPVYPVYVDTNVMAGHTGPCNDQGEYEGLTYLPINAGNNFTAQIPSQKVDLIYLCFPNNPTGAVASKSHLQDWVNYAKSHGSIILFDAAYEAFITDPEIPHSIYEIEGARDCAIEFRSFSKNAGFTGTRCALTVVPKTLMAKAADESDVELWKLWNRRQSTKFNGVSYIVQRGAEAVYSEAGQAQTKALISFYLENAKIIREKLTAAGLQVFGGVNAPYVWVQTPNGISSWDFFDQLLHKTNVVGTPGSGFGAAGEGYFRISAFNSRANVEEAMRRITANL</sequence>
<proteinExistence type="inferred from homology"/>
<reference key="1">
    <citation type="journal article" date="2008" name="Proc. Natl. Acad. Sci. U.S.A.">
        <title>Niche adaptation and genome expansion in the chlorophyll d-producing cyanobacterium Acaryochloris marina.</title>
        <authorList>
            <person name="Swingley W.D."/>
            <person name="Chen M."/>
            <person name="Cheung P.C."/>
            <person name="Conrad A.L."/>
            <person name="Dejesa L.C."/>
            <person name="Hao J."/>
            <person name="Honchak B.M."/>
            <person name="Karbach L.E."/>
            <person name="Kurdoglu A."/>
            <person name="Lahiri S."/>
            <person name="Mastrian S.D."/>
            <person name="Miyashita H."/>
            <person name="Page L."/>
            <person name="Ramakrishna P."/>
            <person name="Satoh S."/>
            <person name="Sattley W.M."/>
            <person name="Shimada Y."/>
            <person name="Taylor H.L."/>
            <person name="Tomo T."/>
            <person name="Tsuchiya T."/>
            <person name="Wang Z.T."/>
            <person name="Raymond J."/>
            <person name="Mimuro M."/>
            <person name="Blankenship R.E."/>
            <person name="Touchman J.W."/>
        </authorList>
    </citation>
    <scope>NUCLEOTIDE SEQUENCE [LARGE SCALE GENOMIC DNA]</scope>
    <source>
        <strain>MBIC 11017</strain>
    </source>
</reference>
<keyword id="KW-0032">Aminotransferase</keyword>
<keyword id="KW-0663">Pyridoxal phosphate</keyword>
<keyword id="KW-1185">Reference proteome</keyword>
<keyword id="KW-0808">Transferase</keyword>
<gene>
    <name evidence="1" type="primary">dapL</name>
    <name type="ordered locus">AM1_1880</name>
</gene>
<name>DAPAT_ACAM1</name>